<accession>Q8ETG9</accession>
<dbReference type="EMBL" id="BA000028">
    <property type="protein sequence ID" value="BAC12248.1"/>
    <property type="molecule type" value="Genomic_DNA"/>
</dbReference>
<dbReference type="RefSeq" id="WP_011064694.1">
    <property type="nucleotide sequence ID" value="NC_004193.1"/>
</dbReference>
<dbReference type="SMR" id="Q8ETG9"/>
<dbReference type="STRING" id="221109.gene:10732495"/>
<dbReference type="KEGG" id="oih:OB0292"/>
<dbReference type="eggNOG" id="COG1959">
    <property type="taxonomic scope" value="Bacteria"/>
</dbReference>
<dbReference type="HOGENOM" id="CLU_107144_2_1_9"/>
<dbReference type="OrthoDB" id="9795923at2"/>
<dbReference type="PhylomeDB" id="Q8ETG9"/>
<dbReference type="Proteomes" id="UP000000822">
    <property type="component" value="Chromosome"/>
</dbReference>
<dbReference type="GO" id="GO:0005829">
    <property type="term" value="C:cytosol"/>
    <property type="evidence" value="ECO:0007669"/>
    <property type="project" value="TreeGrafter"/>
</dbReference>
<dbReference type="GO" id="GO:0051537">
    <property type="term" value="F:2 iron, 2 sulfur cluster binding"/>
    <property type="evidence" value="ECO:0007669"/>
    <property type="project" value="UniProtKB-KW"/>
</dbReference>
<dbReference type="GO" id="GO:0003677">
    <property type="term" value="F:DNA binding"/>
    <property type="evidence" value="ECO:0007669"/>
    <property type="project" value="UniProtKB-KW"/>
</dbReference>
<dbReference type="GO" id="GO:0003700">
    <property type="term" value="F:DNA-binding transcription factor activity"/>
    <property type="evidence" value="ECO:0007669"/>
    <property type="project" value="TreeGrafter"/>
</dbReference>
<dbReference type="GO" id="GO:0046872">
    <property type="term" value="F:metal ion binding"/>
    <property type="evidence" value="ECO:0007669"/>
    <property type="project" value="UniProtKB-KW"/>
</dbReference>
<dbReference type="Gene3D" id="1.10.10.10">
    <property type="entry name" value="Winged helix-like DNA-binding domain superfamily/Winged helix DNA-binding domain"/>
    <property type="match status" value="1"/>
</dbReference>
<dbReference type="InterPro" id="IPR000944">
    <property type="entry name" value="Tscrpt_reg_Rrf2"/>
</dbReference>
<dbReference type="InterPro" id="IPR036388">
    <property type="entry name" value="WH-like_DNA-bd_sf"/>
</dbReference>
<dbReference type="InterPro" id="IPR036390">
    <property type="entry name" value="WH_DNA-bd_sf"/>
</dbReference>
<dbReference type="NCBIfam" id="TIGR00738">
    <property type="entry name" value="rrf2_super"/>
    <property type="match status" value="1"/>
</dbReference>
<dbReference type="PANTHER" id="PTHR33221:SF4">
    <property type="entry name" value="HTH-TYPE TRANSCRIPTIONAL REPRESSOR NSRR"/>
    <property type="match status" value="1"/>
</dbReference>
<dbReference type="PANTHER" id="PTHR33221">
    <property type="entry name" value="WINGED HELIX-TURN-HELIX TRANSCRIPTIONAL REGULATOR, RRF2 FAMILY"/>
    <property type="match status" value="1"/>
</dbReference>
<dbReference type="Pfam" id="PF02082">
    <property type="entry name" value="Rrf2"/>
    <property type="match status" value="1"/>
</dbReference>
<dbReference type="SUPFAM" id="SSF46785">
    <property type="entry name" value="Winged helix' DNA-binding domain"/>
    <property type="match status" value="1"/>
</dbReference>
<dbReference type="PROSITE" id="PS51197">
    <property type="entry name" value="HTH_RRF2_2"/>
    <property type="match status" value="1"/>
</dbReference>
<organism>
    <name type="scientific">Oceanobacillus iheyensis (strain DSM 14371 / CIP 107618 / JCM 11309 / KCTC 3954 / HTE831)</name>
    <dbReference type="NCBI Taxonomy" id="221109"/>
    <lineage>
        <taxon>Bacteria</taxon>
        <taxon>Bacillati</taxon>
        <taxon>Bacillota</taxon>
        <taxon>Bacilli</taxon>
        <taxon>Bacillales</taxon>
        <taxon>Bacillaceae</taxon>
        <taxon>Oceanobacillus</taxon>
    </lineage>
</organism>
<sequence length="147" mass="16726">MNLKKYTDYALRVLIFTGLKSDQELANIKEIAEVYQISQEHLRKVVHELTKMELVVTIRGRNGGIKLAKPASEINIGLLIRQLENDFVLLECFDKGTNHCVISPGCTLKHVINKALVAFFKVLEEYTLEDLIKNEEELLALMGIEKV</sequence>
<comment type="function">
    <text evidence="1">Nitric oxide-responsive transcriptional regulator.</text>
</comment>
<comment type="cofactor">
    <cofactor evidence="3">
        <name>[2Fe-2S] cluster</name>
        <dbReference type="ChEBI" id="CHEBI:190135"/>
    </cofactor>
    <text evidence="3">Binds 1 [2Fe-2S] cluster per subunit.</text>
</comment>
<protein>
    <recommendedName>
        <fullName>HTH-type transcriptional regulator NsrR</fullName>
    </recommendedName>
</protein>
<reference key="1">
    <citation type="journal article" date="2002" name="Nucleic Acids Res.">
        <title>Genome sequence of Oceanobacillus iheyensis isolated from the Iheya Ridge and its unexpected adaptive capabilities to extreme environments.</title>
        <authorList>
            <person name="Takami H."/>
            <person name="Takaki Y."/>
            <person name="Uchiyama I."/>
        </authorList>
    </citation>
    <scope>NUCLEOTIDE SEQUENCE [LARGE SCALE GENOMIC DNA]</scope>
    <source>
        <strain>DSM 14371 / CIP 107618 / JCM 11309 / KCTC 3954 / HTE831</strain>
    </source>
</reference>
<name>NSRR_OCEIH</name>
<proteinExistence type="inferred from homology"/>
<keyword id="KW-0001">2Fe-2S</keyword>
<keyword id="KW-0238">DNA-binding</keyword>
<keyword id="KW-0408">Iron</keyword>
<keyword id="KW-0411">Iron-sulfur</keyword>
<keyword id="KW-0479">Metal-binding</keyword>
<keyword id="KW-1185">Reference proteome</keyword>
<keyword id="KW-0804">Transcription</keyword>
<keyword id="KW-0805">Transcription regulation</keyword>
<evidence type="ECO:0000250" key="1"/>
<evidence type="ECO:0000255" key="2">
    <source>
        <dbReference type="PROSITE-ProRule" id="PRU00540"/>
    </source>
</evidence>
<evidence type="ECO:0000305" key="3"/>
<feature type="chain" id="PRO_0000271135" description="HTH-type transcriptional regulator NsrR">
    <location>
        <begin position="1"/>
        <end position="147"/>
    </location>
</feature>
<feature type="domain" description="HTH rrf2-type" evidence="2">
    <location>
        <begin position="2"/>
        <end position="133"/>
    </location>
</feature>
<feature type="DNA-binding region" description="H-T-H motif" evidence="2">
    <location>
        <begin position="28"/>
        <end position="51"/>
    </location>
</feature>
<feature type="binding site" evidence="2">
    <location>
        <position position="92"/>
    </location>
    <ligand>
        <name>[2Fe-2S] cluster</name>
        <dbReference type="ChEBI" id="CHEBI:190135"/>
    </ligand>
</feature>
<feature type="binding site" evidence="2">
    <location>
        <position position="100"/>
    </location>
    <ligand>
        <name>[2Fe-2S] cluster</name>
        <dbReference type="ChEBI" id="CHEBI:190135"/>
    </ligand>
</feature>
<feature type="binding site" evidence="2">
    <location>
        <position position="106"/>
    </location>
    <ligand>
        <name>[2Fe-2S] cluster</name>
        <dbReference type="ChEBI" id="CHEBI:190135"/>
    </ligand>
</feature>
<gene>
    <name type="primary">nsrR</name>
    <name type="ordered locus">OB0292</name>
</gene>